<gene>
    <name type="ordered locus">NWMN_0963</name>
</gene>
<evidence type="ECO:0000255" key="1">
    <source>
        <dbReference type="HAMAP-Rule" id="MF_01041"/>
    </source>
</evidence>
<feature type="chain" id="PRO_1000072986" description="UPF0223 protein NWMN_0963">
    <location>
        <begin position="1"/>
        <end position="91"/>
    </location>
</feature>
<comment type="similarity">
    <text evidence="1">Belongs to the UPF0223 family.</text>
</comment>
<proteinExistence type="inferred from homology"/>
<reference key="1">
    <citation type="journal article" date="2008" name="J. Bacteriol.">
        <title>Genome sequence of Staphylococcus aureus strain Newman and comparative analysis of staphylococcal genomes: polymorphism and evolution of two major pathogenicity islands.</title>
        <authorList>
            <person name="Baba T."/>
            <person name="Bae T."/>
            <person name="Schneewind O."/>
            <person name="Takeuchi F."/>
            <person name="Hiramatsu K."/>
        </authorList>
    </citation>
    <scope>NUCLEOTIDE SEQUENCE [LARGE SCALE GENOMIC DNA]</scope>
    <source>
        <strain>Newman</strain>
    </source>
</reference>
<accession>A6QFV3</accession>
<dbReference type="EMBL" id="AP009351">
    <property type="protein sequence ID" value="BAF67235.1"/>
    <property type="molecule type" value="Genomic_DNA"/>
</dbReference>
<dbReference type="RefSeq" id="WP_000455597.1">
    <property type="nucleotide sequence ID" value="NZ_JBBIAE010000002.1"/>
</dbReference>
<dbReference type="SMR" id="A6QFV3"/>
<dbReference type="KEGG" id="sae:NWMN_0963"/>
<dbReference type="HOGENOM" id="CLU_166693_0_0_9"/>
<dbReference type="Proteomes" id="UP000006386">
    <property type="component" value="Chromosome"/>
</dbReference>
<dbReference type="Gene3D" id="1.10.220.80">
    <property type="entry name" value="BH2638-like"/>
    <property type="match status" value="1"/>
</dbReference>
<dbReference type="HAMAP" id="MF_01041">
    <property type="entry name" value="UPF0223"/>
    <property type="match status" value="1"/>
</dbReference>
<dbReference type="InterPro" id="IPR023324">
    <property type="entry name" value="BH2638-like_sf"/>
</dbReference>
<dbReference type="InterPro" id="IPR007920">
    <property type="entry name" value="UPF0223"/>
</dbReference>
<dbReference type="NCBIfam" id="NF003353">
    <property type="entry name" value="PRK04387.1"/>
    <property type="match status" value="1"/>
</dbReference>
<dbReference type="Pfam" id="PF05256">
    <property type="entry name" value="UPF0223"/>
    <property type="match status" value="1"/>
</dbReference>
<dbReference type="PIRSF" id="PIRSF037260">
    <property type="entry name" value="UPF0223"/>
    <property type="match status" value="1"/>
</dbReference>
<dbReference type="SUPFAM" id="SSF158504">
    <property type="entry name" value="BH2638-like"/>
    <property type="match status" value="1"/>
</dbReference>
<sequence length="91" mass="10692">MEYEYPIDLDWSNEEMISVINFFNHVEKYYESGVTAGDFMGAYKRFKEIVPAKAEEKQIFNTFEKSSGYNSYKAVQDVKTHSEEQRVTAKK</sequence>
<name>Y963_STAAE</name>
<organism>
    <name type="scientific">Staphylococcus aureus (strain Newman)</name>
    <dbReference type="NCBI Taxonomy" id="426430"/>
    <lineage>
        <taxon>Bacteria</taxon>
        <taxon>Bacillati</taxon>
        <taxon>Bacillota</taxon>
        <taxon>Bacilli</taxon>
        <taxon>Bacillales</taxon>
        <taxon>Staphylococcaceae</taxon>
        <taxon>Staphylococcus</taxon>
    </lineage>
</organism>
<protein>
    <recommendedName>
        <fullName evidence="1">UPF0223 protein NWMN_0963</fullName>
    </recommendedName>
</protein>